<feature type="signal peptide" evidence="9 12 14">
    <location>
        <begin position="1"/>
        <end position="21"/>
    </location>
</feature>
<feature type="chain" id="PRO_0000035370" description="Cytotoxin 3" evidence="9 12 14">
    <location>
        <begin position="22"/>
        <end position="81"/>
    </location>
</feature>
<feature type="disulfide bond" evidence="1 2 4 11 23 24 25 26 27 28">
    <location>
        <begin position="24"/>
        <end position="42"/>
    </location>
</feature>
<feature type="disulfide bond" evidence="1 2 4 11 23 24 25 26 27 28">
    <location>
        <begin position="35"/>
        <end position="59"/>
    </location>
</feature>
<feature type="disulfide bond" evidence="1 2 4 11 23 24 25 26 27 28">
    <location>
        <begin position="63"/>
        <end position="74"/>
    </location>
</feature>
<feature type="disulfide bond" evidence="1 2 4 11 23 24 25 26 27 28">
    <location>
        <begin position="75"/>
        <end position="80"/>
    </location>
</feature>
<feature type="sequence conflict" description="In Ref. 4; CAB42055." evidence="19" ref="4">
    <original>VVV</original>
    <variation>EEE</variation>
    <location>
        <begin position="9"/>
        <end position="11"/>
    </location>
</feature>
<feature type="sequence conflict" description="In Ref. 1; CAA90963." evidence="19" ref="1">
    <original>C</original>
    <variation>R</variation>
    <location>
        <position position="59"/>
    </location>
</feature>
<feature type="strand" evidence="29">
    <location>
        <begin position="23"/>
        <end position="25"/>
    </location>
</feature>
<feature type="strand" evidence="29">
    <location>
        <begin position="32"/>
        <end position="34"/>
    </location>
</feature>
<feature type="strand" evidence="30">
    <location>
        <begin position="36"/>
        <end position="38"/>
    </location>
</feature>
<feature type="strand" evidence="29">
    <location>
        <begin position="41"/>
        <end position="47"/>
    </location>
</feature>
<feature type="strand" evidence="30">
    <location>
        <begin position="49"/>
        <end position="51"/>
    </location>
</feature>
<feature type="strand" evidence="29">
    <location>
        <begin position="56"/>
        <end position="62"/>
    </location>
</feature>
<feature type="strand" evidence="29">
    <location>
        <begin position="68"/>
        <end position="75"/>
    </location>
</feature>
<feature type="strand" evidence="30">
    <location>
        <begin position="77"/>
        <end position="79"/>
    </location>
</feature>
<comment type="function">
    <text evidence="5 6 7 8 10 12 13">Basic protein that binds to cell membrane and depolarizes cardiomyocytes. This cytotoxin also possesses lytic activity on many other cells, including red blood cells (PubMed:8182052). Interaction with sulfatides in the cell membrane induces pore formation and cell internalization. Cytotoxicity is due to pore formation, and to another mechanism independent of membrane-damaging activity. When internalized, it targets the mitochondrial membrane and induces mitochondrial swelling and fragmentation. It inhibits protein kinases C. It binds to the integrin alpha-V/beta-3 (ITGAV/ITGB3) with a moderate affinity (PubMed:16407244). It also binds with high affinity to heparin (PubMed:17685633).</text>
</comment>
<comment type="subunit">
    <text evidence="2 3 6">Monomer in solution; Homodimer and oligomer in the presence of negatively charged lipids forming a pore with a size ranging between 20 and 30 Angstroms (PubMed:12660250, PubMed:16263708). Interacts with Kv channel-interacting protein 1 (KCNIP1) in a calcium-independent manner (PubMed:15184042).</text>
</comment>
<comment type="subcellular location">
    <subcellularLocation>
        <location evidence="9">Secreted</location>
    </subcellularLocation>
    <subcellularLocation>
        <location evidence="20 21">Target cell membrane</location>
    </subcellularLocation>
</comment>
<comment type="tissue specificity">
    <text evidence="19">Expressed by the venom gland.</text>
</comment>
<comment type="miscellaneous">
    <text evidence="22">Is classified as a P-type cytotoxin, since a proline residue stands at position 51 (Pro-31 in standard classification).</text>
</comment>
<comment type="similarity">
    <text evidence="19">Belongs to the three-finger toxin family. Short-chain subfamily. Type IA cytotoxin sub-subfamily.</text>
</comment>
<organism>
    <name type="scientific">Naja atra</name>
    <name type="common">Chinese cobra</name>
    <dbReference type="NCBI Taxonomy" id="8656"/>
    <lineage>
        <taxon>Eukaryota</taxon>
        <taxon>Metazoa</taxon>
        <taxon>Chordata</taxon>
        <taxon>Craniata</taxon>
        <taxon>Vertebrata</taxon>
        <taxon>Euteleostomi</taxon>
        <taxon>Lepidosauria</taxon>
        <taxon>Squamata</taxon>
        <taxon>Bifurcata</taxon>
        <taxon>Unidentata</taxon>
        <taxon>Episquamata</taxon>
        <taxon>Toxicofera</taxon>
        <taxon>Serpentes</taxon>
        <taxon>Colubroidea</taxon>
        <taxon>Elapidae</taxon>
        <taxon>Elapinae</taxon>
        <taxon>Naja</taxon>
    </lineage>
</organism>
<name>3SA3_NAJAT</name>
<dbReference type="EMBL" id="Z54227">
    <property type="protein sequence ID" value="CAA90963.1"/>
    <property type="molecule type" value="mRNA"/>
</dbReference>
<dbReference type="EMBL" id="U58486">
    <property type="protein sequence ID" value="AAB18382.1"/>
    <property type="molecule type" value="mRNA"/>
</dbReference>
<dbReference type="EMBL" id="U42585">
    <property type="protein sequence ID" value="AAB01541.1"/>
    <property type="molecule type" value="mRNA"/>
</dbReference>
<dbReference type="EMBL" id="AJ007796">
    <property type="protein sequence ID" value="CAA07686.1"/>
    <property type="molecule type" value="mRNA"/>
</dbReference>
<dbReference type="EMBL" id="AJ238735">
    <property type="protein sequence ID" value="CAB42055.1"/>
    <property type="molecule type" value="Genomic_DNA"/>
</dbReference>
<dbReference type="PIR" id="JC4620">
    <property type="entry name" value="H3NJ3F"/>
</dbReference>
<dbReference type="PDB" id="1H0J">
    <property type="method" value="X-ray"/>
    <property type="resolution" value="1.90 A"/>
    <property type="chains" value="A/B/C=22-81"/>
</dbReference>
<dbReference type="PDB" id="1I02">
    <property type="method" value="NMR"/>
    <property type="chains" value="A=22-81"/>
</dbReference>
<dbReference type="PDB" id="1XT3">
    <property type="method" value="X-ray"/>
    <property type="resolution" value="2.40 A"/>
    <property type="chains" value="A/B=22-81"/>
</dbReference>
<dbReference type="PDB" id="2BHI">
    <property type="method" value="X-ray"/>
    <property type="resolution" value="2.31 A"/>
    <property type="chains" value="A/B=22-81"/>
</dbReference>
<dbReference type="PDB" id="2CRS">
    <property type="method" value="NMR"/>
    <property type="chains" value="A=22-81"/>
</dbReference>
<dbReference type="PDB" id="2CRT">
    <property type="method" value="NMR"/>
    <property type="chains" value="A=22-81"/>
</dbReference>
<dbReference type="PDBsum" id="1H0J"/>
<dbReference type="PDBsum" id="1I02"/>
<dbReference type="PDBsum" id="1XT3"/>
<dbReference type="PDBsum" id="2BHI"/>
<dbReference type="PDBsum" id="2CRS"/>
<dbReference type="PDBsum" id="2CRT"/>
<dbReference type="BMRB" id="P60301"/>
<dbReference type="SMR" id="P60301"/>
<dbReference type="EvolutionaryTrace" id="P60301"/>
<dbReference type="GO" id="GO:0005576">
    <property type="term" value="C:extracellular region"/>
    <property type="evidence" value="ECO:0007669"/>
    <property type="project" value="UniProtKB-SubCell"/>
</dbReference>
<dbReference type="GO" id="GO:0016020">
    <property type="term" value="C:membrane"/>
    <property type="evidence" value="ECO:0007669"/>
    <property type="project" value="UniProtKB-KW"/>
</dbReference>
<dbReference type="GO" id="GO:0044218">
    <property type="term" value="C:other organism cell membrane"/>
    <property type="evidence" value="ECO:0007669"/>
    <property type="project" value="UniProtKB-KW"/>
</dbReference>
<dbReference type="GO" id="GO:0090729">
    <property type="term" value="F:toxin activity"/>
    <property type="evidence" value="ECO:0007669"/>
    <property type="project" value="UniProtKB-KW"/>
</dbReference>
<dbReference type="GO" id="GO:0031640">
    <property type="term" value="P:killing of cells of another organism"/>
    <property type="evidence" value="ECO:0007669"/>
    <property type="project" value="UniProtKB-KW"/>
</dbReference>
<dbReference type="CDD" id="cd00206">
    <property type="entry name" value="TFP_snake_toxin"/>
    <property type="match status" value="1"/>
</dbReference>
<dbReference type="FunFam" id="2.10.60.10:FF:000024">
    <property type="entry name" value="Cytotoxin 1"/>
    <property type="match status" value="1"/>
</dbReference>
<dbReference type="Gene3D" id="2.10.60.10">
    <property type="entry name" value="CD59"/>
    <property type="match status" value="1"/>
</dbReference>
<dbReference type="InterPro" id="IPR003572">
    <property type="entry name" value="Cytotoxin_Cobra"/>
</dbReference>
<dbReference type="InterPro" id="IPR003571">
    <property type="entry name" value="Snake_3FTx"/>
</dbReference>
<dbReference type="InterPro" id="IPR045860">
    <property type="entry name" value="Snake_toxin-like_sf"/>
</dbReference>
<dbReference type="InterPro" id="IPR018354">
    <property type="entry name" value="Snake_toxin_con_site"/>
</dbReference>
<dbReference type="InterPro" id="IPR054131">
    <property type="entry name" value="Toxin_cobra-type"/>
</dbReference>
<dbReference type="Pfam" id="PF21947">
    <property type="entry name" value="Toxin_cobra-type"/>
    <property type="match status" value="1"/>
</dbReference>
<dbReference type="PRINTS" id="PR00282">
    <property type="entry name" value="CYTOTOXIN"/>
</dbReference>
<dbReference type="SUPFAM" id="SSF57302">
    <property type="entry name" value="Snake toxin-like"/>
    <property type="match status" value="1"/>
</dbReference>
<dbReference type="PROSITE" id="PS00272">
    <property type="entry name" value="SNAKE_TOXIN"/>
    <property type="match status" value="1"/>
</dbReference>
<proteinExistence type="evidence at protein level"/>
<keyword id="KW-0002">3D-structure</keyword>
<keyword id="KW-0123">Cardiotoxin</keyword>
<keyword id="KW-0204">Cytolysis</keyword>
<keyword id="KW-0903">Direct protein sequencing</keyword>
<keyword id="KW-1015">Disulfide bond</keyword>
<keyword id="KW-0354">Hemolysis</keyword>
<keyword id="KW-0472">Membrane</keyword>
<keyword id="KW-0964">Secreted</keyword>
<keyword id="KW-0732">Signal</keyword>
<keyword id="KW-1052">Target cell membrane</keyword>
<keyword id="KW-1053">Target membrane</keyword>
<keyword id="KW-0800">Toxin</keyword>
<accession>P60301</accession>
<accession>P01444</accession>
<accession>Q9PS23</accession>
<accession>Q9W6W7</accession>
<sequence length="81" mass="9038">MKTLLLTLVVVTIVCLDLGYTLKCNKLVPLFYKTCPAGKNLCYKMFMVATPKVPVKRGCIDVCPKSSLLVKYVCCNTDRCN</sequence>
<protein>
    <recommendedName>
        <fullName>Cytotoxin 3</fullName>
    </recommendedName>
    <alternativeName>
        <fullName evidence="15">Cardiotoxin 3</fullName>
        <shortName>CTX-3</shortName>
        <shortName>CTX3</shortName>
    </alternativeName>
    <alternativeName>
        <fullName evidence="16 17">Cardiotoxin A3</fullName>
        <shortName evidence="16 17">CTX A3</shortName>
    </alternativeName>
    <alternativeName>
        <fullName evidence="18">Cardiotoxin III</fullName>
    </alternativeName>
    <alternativeName>
        <fullName>Cardiotoxin analog III</fullName>
        <shortName>CTX III</shortName>
    </alternativeName>
</protein>
<reference key="1">
    <citation type="journal article" date="1996" name="Biochem. Biophys. Res. Commun.">
        <title>cDNA sequence analysis and expression of cardiotoxins from Taiwan Cobra.</title>
        <authorList>
            <person name="Chang L.-S."/>
            <person name="Wu P.-F."/>
            <person name="Lin J."/>
        </authorList>
    </citation>
    <scope>NUCLEOTIDE SEQUENCE [MRNA]</scope>
    <source>
        <tissue>Venom gland</tissue>
    </source>
</reference>
<reference key="2">
    <citation type="submission" date="1995-12" db="EMBL/GenBank/DDBJ databases">
        <authorList>
            <person name="Chu R.C."/>
            <person name="Yang C.-C."/>
        </authorList>
    </citation>
    <scope>NUCLEOTIDE SEQUENCE [MRNA]</scope>
    <source>
        <tissue>Venom gland</tissue>
    </source>
</reference>
<reference key="3">
    <citation type="submission" date="1998-09" db="EMBL/GenBank/DDBJ databases">
        <title>cDNA cloning and expression of cardiotoxins from Chinese continental cobra.</title>
        <authorList>
            <person name="Qian Y.C."/>
            <person name="Fan C.Y."/>
            <person name="Gong Y."/>
            <person name="Yang S.-L."/>
        </authorList>
    </citation>
    <scope>NUCLEOTIDE SEQUENCE [MRNA]</scope>
    <source>
        <tissue>Venom gland</tissue>
    </source>
</reference>
<reference key="4">
    <citation type="journal article" date="2000" name="Toxicon">
        <title>The multiplicity of cardiotoxins from Naja naja atra (Taiwan cobra) venom.</title>
        <authorList>
            <person name="Chang L.-S."/>
            <person name="Huang H.-B."/>
            <person name="Lin S.-R."/>
        </authorList>
    </citation>
    <scope>NUCLEOTIDE SEQUENCE [GENOMIC DNA]</scope>
    <source>
        <tissue>Liver</tissue>
    </source>
</reference>
<reference key="5">
    <citation type="journal article" date="1970" name="Biochem. Biophys. Res. Commun.">
        <title>The amino acid sequence of cardiotoxin from Formosan cobra (Naja naja atra) venom.</title>
        <authorList>
            <person name="Narita K."/>
            <person name="Lee C.Y."/>
        </authorList>
    </citation>
    <scope>PROTEIN SEQUENCE OF 22-81</scope>
    <scope>SUBCELLULAR LOCATION</scope>
    <source>
        <tissue>Venom</tissue>
    </source>
</reference>
<reference key="6">
    <citation type="journal article" date="1976" name="FEBS Lett.">
        <title>Amino acid sequence of cardiotoxin from the venom of Naja naja atra.</title>
        <authorList>
            <person name="Hayashi K."/>
            <person name="Takechi M."/>
            <person name="Kaneda N."/>
            <person name="Sasaki T."/>
        </authorList>
    </citation>
    <scope>PROTEIN SEQUENCE OF 22-81</scope>
    <scope>SEQUENCE REVISION</scope>
    <source>
        <tissue>Venom</tissue>
    </source>
</reference>
<reference key="7">
    <citation type="journal article" date="1993" name="Biochemistry">
        <title>Cobra venom cardiotoxin (cytotoxin) isoforms and neurotoxin: comparative potency of protein kinase C inhibition and cancer cell cytotoxicity and modes of enzyme inhibition.</title>
        <authorList>
            <person name="Chiou S.-H."/>
            <person name="Raynor R.L."/>
            <person name="Zheng B."/>
            <person name="Chambers T.C."/>
            <person name="Kuo J.F."/>
        </authorList>
    </citation>
    <scope>PROTEIN SEQUENCE OF 22-81</scope>
    <scope>FUNCTION AS AN INHIBITOR OF PKC</scope>
</reference>
<reference key="8">
    <citation type="journal article" date="1994" name="J. Biol. Chem.">
        <title>Two distinct types of cardiotoxin as revealed by the structure and activity relationship of their interaction with zwitterionic phospholipid dispersions.</title>
        <authorList>
            <person name="Chien K.-Y."/>
            <person name="Chiang C.-M."/>
            <person name="Hseu Y.-C."/>
            <person name="Vyas A.A."/>
            <person name="Rule G.S."/>
            <person name="Wu W.-G."/>
        </authorList>
    </citation>
    <scope>FUNCTION</scope>
    <scope>APPARTENANCE TO P-TYPE CYTOTOXIN GROUP</scope>
</reference>
<reference key="9">
    <citation type="journal article" date="1997" name="Biochemistry">
        <title>Action of Taiwan cobra cardiotoxin on membranes: binding modes of a beta-sheet polypeptide with phosphatidylcholine bilayers.</title>
        <authorList>
            <person name="Sue S.-C."/>
            <person name="Rajan P.K."/>
            <person name="Chen T.-S."/>
            <person name="Hsieh C.-H."/>
            <person name="Wu W.-G."/>
        </authorList>
    </citation>
    <scope>FUNCTION ON MEMBRANES</scope>
</reference>
<reference key="10">
    <citation type="journal article" date="2004" name="Biochem. Biophys. Res. Commun.">
        <title>Evidence showing an intermolecular interaction between KChIP proteins and Taiwan cobra cardiotoxins.</title>
        <authorList>
            <person name="Lin Y.-L."/>
            <person name="Lin S.-R."/>
            <person name="Wu T.T."/>
            <person name="Chang L.-S."/>
        </authorList>
    </citation>
    <scope>INTERACTION WITH KCNIP1</scope>
</reference>
<reference key="11">
    <citation type="journal article" date="2005" name="FEBS Lett.">
        <title>Amphiphilic beta-sheet cobra cardiotoxin targets mitochondria and disrupts its network.</title>
        <authorList>
            <person name="Wang C.-H."/>
            <person name="Wu W.-G."/>
        </authorList>
    </citation>
    <scope>FUNCTION ON MITOCHONDRIA</scope>
</reference>
<reference key="12">
    <citation type="journal article" date="2006" name="J. Biol. Chem.">
        <title>Glycosphingolipid-facilitated membrane insertion and internalization of cobra cardiotoxin. The sulfatide-cardiotoxin complex structure in a membrane-like environment suggests a lipid-dependent cell-penetrating mechanism for membrane binding polypeptides.</title>
        <authorList>
            <person name="Wang C.-H."/>
            <person name="Liu J.H."/>
            <person name="Lee S.C."/>
            <person name="Hsiao C.D."/>
            <person name="Wu W.-G."/>
        </authorList>
    </citation>
    <scope>FUNCTION</scope>
    <scope>INTERACTION WITH GLYCOSPHINGOLIPID</scope>
    <scope>SUBUNIT</scope>
</reference>
<reference key="13">
    <citation type="journal article" date="2006" name="J. Biol. Chem.">
        <title>Non-cytotoxic cobra cardiotoxin A5 binds to alpha(v)beta3 integrin and inhibits bone resorption. Identification of cardiotoxins as non-RGD integrin-binding proteins of the Ly-6 family.</title>
        <authorList>
            <person name="Wu P.-L."/>
            <person name="Lee S.-C."/>
            <person name="Chuang C.-C."/>
            <person name="Mori S."/>
            <person name="Akakura N."/>
            <person name="Wu W.-G."/>
            <person name="Takada Y."/>
        </authorList>
    </citation>
    <scope>FUNCTION</scope>
    <scope>BINDING TO INTEGRIN ALPHA-V/BETA-3</scope>
</reference>
<reference key="14">
    <citation type="journal article" date="2007" name="Biochemistry">
        <title>Structures of heparin-derived tetrasaccharide bound to cobra cardiotoxins: heparin binding at a single protein site with diverse side chain interactions.</title>
        <authorList>
            <person name="Tjong S.C."/>
            <person name="Chen T.S."/>
            <person name="Huang W.N."/>
            <person name="Wu W.G."/>
        </authorList>
    </citation>
    <scope>FUNCTION</scope>
    <scope>BINDING TO HEPARIN</scope>
</reference>
<reference key="15">
    <citation type="journal article" date="2007" name="Toxicon">
        <title>The mechanism of cytotoxicity by Naja naja atra cardiotoxin 3 is physically distant from its membrane-damaging effect.</title>
        <authorList>
            <person name="Chen K.-C."/>
            <person name="Kao P.-H."/>
            <person name="Lin S.-R."/>
            <person name="Chang L.-S."/>
        </authorList>
    </citation>
    <scope>FUNCTION</scope>
</reference>
<reference key="16">
    <citation type="journal article" date="1994" name="J. Mol. Biol.">
        <title>Cardiotoxin III from the Taiwan cobra (Naja naja atra). Determination of structure in solution and comparison with short neurotoxins.</title>
        <authorList>
            <person name="Bhaskaran R."/>
            <person name="Huang C.C."/>
            <person name="Chang D.K."/>
            <person name="Yu C."/>
        </authorList>
    </citation>
    <scope>STRUCTURE BY NMR</scope>
    <scope>DISULFIDE BONDS</scope>
</reference>
<reference key="17">
    <citation type="journal article" date="2001" name="Biochemistry">
        <title>Dynamic characterization of the water binding loop in the P-type cardiotoxin: implication for the role of the bound water molecule.</title>
        <authorList>
            <person name="Sue S.-C."/>
            <person name="Jarrell H.C."/>
            <person name="Brisson J.-R."/>
            <person name="Wu W.-G."/>
        </authorList>
    </citation>
    <scope>STRUCTURE BY NMR</scope>
    <scope>DISULFIDE BONDS</scope>
</reference>
<reference key="18">
    <citation type="journal article" date="2003" name="J. Biol. Chem.">
        <title>Structural basis of membrane-induced cardiotoxin A3 oligomerization.</title>
        <authorList>
            <person name="Forouhar F."/>
            <person name="Huang W.-N."/>
            <person name="Liu J.-H."/>
            <person name="Chien K.-Y."/>
            <person name="Wu W.-G."/>
            <person name="Hsiao C.-D."/>
        </authorList>
    </citation>
    <scope>X-RAY CRYSTALLOGRAPHY (1.9 ANGSTROMS) OF 22-81 WITH ANIONIC LIPID SDS</scope>
    <scope>DISULFIDE BONDS</scope>
    <scope>SUBUNIT</scope>
</reference>
<reference key="19">
    <citation type="journal article" date="2005" name="J. Biol. Chem.">
        <title>Structural basis of citrate-dependent and heparan sulfate-mediated cell surface retention of cobra cardiotoxin A3.</title>
        <authorList>
            <person name="Lee S.-C."/>
            <person name="Guan H.-H."/>
            <person name="Wang C.-H."/>
            <person name="Huang W.-N."/>
            <person name="Tjong S.-C."/>
            <person name="Chen C.-J."/>
            <person name="Wu W.-G."/>
        </authorList>
    </citation>
    <scope>X-RAY CRYSTALLOGRAPHY (2.4 ANGSTROMS) OF 22-81</scope>
    <scope>DISULFIDE BONDS</scope>
</reference>
<evidence type="ECO:0000269" key="1">
    <source>
    </source>
</evidence>
<evidence type="ECO:0000269" key="2">
    <source>
    </source>
</evidence>
<evidence type="ECO:0000269" key="3">
    <source>
    </source>
</evidence>
<evidence type="ECO:0000269" key="4">
    <source>
    </source>
</evidence>
<evidence type="ECO:0000269" key="5">
    <source>
    </source>
</evidence>
<evidence type="ECO:0000269" key="6">
    <source>
    </source>
</evidence>
<evidence type="ECO:0000269" key="7">
    <source>
    </source>
</evidence>
<evidence type="ECO:0000269" key="8">
    <source>
    </source>
</evidence>
<evidence type="ECO:0000269" key="9">
    <source>
    </source>
</evidence>
<evidence type="ECO:0000269" key="10">
    <source>
    </source>
</evidence>
<evidence type="ECO:0000269" key="11">
    <source>
    </source>
</evidence>
<evidence type="ECO:0000269" key="12">
    <source>
    </source>
</evidence>
<evidence type="ECO:0000269" key="13">
    <source>
    </source>
</evidence>
<evidence type="ECO:0000269" key="14">
    <source>
    </source>
</evidence>
<evidence type="ECO:0000303" key="15">
    <source>
    </source>
</evidence>
<evidence type="ECO:0000303" key="16">
    <source>
    </source>
</evidence>
<evidence type="ECO:0000303" key="17">
    <source>
    </source>
</evidence>
<evidence type="ECO:0000303" key="18">
    <source>
    </source>
</evidence>
<evidence type="ECO:0000305" key="19"/>
<evidence type="ECO:0000305" key="20">
    <source>
    </source>
</evidence>
<evidence type="ECO:0000305" key="21">
    <source>
    </source>
</evidence>
<evidence type="ECO:0000305" key="22">
    <source>
    </source>
</evidence>
<evidence type="ECO:0000312" key="23">
    <source>
        <dbReference type="PDB" id="1H0J"/>
    </source>
</evidence>
<evidence type="ECO:0000312" key="24">
    <source>
        <dbReference type="PDB" id="1I02"/>
    </source>
</evidence>
<evidence type="ECO:0000312" key="25">
    <source>
        <dbReference type="PDB" id="1XT3"/>
    </source>
</evidence>
<evidence type="ECO:0000312" key="26">
    <source>
        <dbReference type="PDB" id="2BHI"/>
    </source>
</evidence>
<evidence type="ECO:0000312" key="27">
    <source>
        <dbReference type="PDB" id="2CRS"/>
    </source>
</evidence>
<evidence type="ECO:0000312" key="28">
    <source>
        <dbReference type="PDB" id="2CRT"/>
    </source>
</evidence>
<evidence type="ECO:0007829" key="29">
    <source>
        <dbReference type="PDB" id="1H0J"/>
    </source>
</evidence>
<evidence type="ECO:0007829" key="30">
    <source>
        <dbReference type="PDB" id="2CRS"/>
    </source>
</evidence>